<evidence type="ECO:0000255" key="1">
    <source>
        <dbReference type="HAMAP-Rule" id="MF_01724"/>
    </source>
</evidence>
<evidence type="ECO:0000256" key="2">
    <source>
        <dbReference type="SAM" id="MobiDB-lite"/>
    </source>
</evidence>
<name>SSUB1_PSESM</name>
<proteinExistence type="inferred from homology"/>
<keyword id="KW-0067">ATP-binding</keyword>
<keyword id="KW-0997">Cell inner membrane</keyword>
<keyword id="KW-1003">Cell membrane</keyword>
<keyword id="KW-0472">Membrane</keyword>
<keyword id="KW-0547">Nucleotide-binding</keyword>
<keyword id="KW-1185">Reference proteome</keyword>
<keyword id="KW-1278">Translocase</keyword>
<keyword id="KW-0813">Transport</keyword>
<dbReference type="EC" id="7.6.2.14" evidence="1"/>
<dbReference type="EMBL" id="AE016853">
    <property type="protein sequence ID" value="AAO55317.1"/>
    <property type="molecule type" value="Genomic_DNA"/>
</dbReference>
<dbReference type="RefSeq" id="NP_791622.1">
    <property type="nucleotide sequence ID" value="NC_004578.1"/>
</dbReference>
<dbReference type="RefSeq" id="WP_005767689.1">
    <property type="nucleotide sequence ID" value="NC_004578.1"/>
</dbReference>
<dbReference type="SMR" id="Q885N4"/>
<dbReference type="STRING" id="223283.PSPTO_1797"/>
<dbReference type="GeneID" id="1183438"/>
<dbReference type="KEGG" id="pst:PSPTO_1797"/>
<dbReference type="PATRIC" id="fig|223283.9.peg.1827"/>
<dbReference type="eggNOG" id="COG1116">
    <property type="taxonomic scope" value="Bacteria"/>
</dbReference>
<dbReference type="HOGENOM" id="CLU_000604_1_22_6"/>
<dbReference type="OrthoDB" id="9802264at2"/>
<dbReference type="PhylomeDB" id="Q885N4"/>
<dbReference type="Proteomes" id="UP000002515">
    <property type="component" value="Chromosome"/>
</dbReference>
<dbReference type="GO" id="GO:0005886">
    <property type="term" value="C:plasma membrane"/>
    <property type="evidence" value="ECO:0007669"/>
    <property type="project" value="UniProtKB-SubCell"/>
</dbReference>
<dbReference type="GO" id="GO:0005524">
    <property type="term" value="F:ATP binding"/>
    <property type="evidence" value="ECO:0007669"/>
    <property type="project" value="UniProtKB-KW"/>
</dbReference>
<dbReference type="GO" id="GO:0016887">
    <property type="term" value="F:ATP hydrolysis activity"/>
    <property type="evidence" value="ECO:0007669"/>
    <property type="project" value="InterPro"/>
</dbReference>
<dbReference type="Gene3D" id="3.40.50.300">
    <property type="entry name" value="P-loop containing nucleotide triphosphate hydrolases"/>
    <property type="match status" value="1"/>
</dbReference>
<dbReference type="InterPro" id="IPR003593">
    <property type="entry name" value="AAA+_ATPase"/>
</dbReference>
<dbReference type="InterPro" id="IPR003439">
    <property type="entry name" value="ABC_transporter-like_ATP-bd"/>
</dbReference>
<dbReference type="InterPro" id="IPR017871">
    <property type="entry name" value="ABC_transporter-like_CS"/>
</dbReference>
<dbReference type="InterPro" id="IPR050166">
    <property type="entry name" value="ABC_transporter_ATP-bind"/>
</dbReference>
<dbReference type="InterPro" id="IPR027417">
    <property type="entry name" value="P-loop_NTPase"/>
</dbReference>
<dbReference type="PANTHER" id="PTHR42788:SF17">
    <property type="entry name" value="ALIPHATIC SULFONATES IMPORT ATP-BINDING PROTEIN SSUB"/>
    <property type="match status" value="1"/>
</dbReference>
<dbReference type="PANTHER" id="PTHR42788">
    <property type="entry name" value="TAURINE IMPORT ATP-BINDING PROTEIN-RELATED"/>
    <property type="match status" value="1"/>
</dbReference>
<dbReference type="Pfam" id="PF00005">
    <property type="entry name" value="ABC_tran"/>
    <property type="match status" value="1"/>
</dbReference>
<dbReference type="SMART" id="SM00382">
    <property type="entry name" value="AAA"/>
    <property type="match status" value="1"/>
</dbReference>
<dbReference type="SUPFAM" id="SSF52540">
    <property type="entry name" value="P-loop containing nucleoside triphosphate hydrolases"/>
    <property type="match status" value="1"/>
</dbReference>
<dbReference type="PROSITE" id="PS00211">
    <property type="entry name" value="ABC_TRANSPORTER_1"/>
    <property type="match status" value="1"/>
</dbReference>
<dbReference type="PROSITE" id="PS50893">
    <property type="entry name" value="ABC_TRANSPORTER_2"/>
    <property type="match status" value="1"/>
</dbReference>
<dbReference type="PROSITE" id="PS51291">
    <property type="entry name" value="SSUB"/>
    <property type="match status" value="1"/>
</dbReference>
<sequence>MATFDLRNTPSVTIPAPVQLRNVVRQFGRQRVIDGLDLDIAAGEFVALLGASGSGKTTLLRTLAGLDSIDSGELRVPVARAAVFQEPRLMPWKSAWKNVVLGLRVNDAKARAHAALTEVGLAHRLNAFPATLSGGEAQRVALARGLVREPKLLLLDEPFAALDALTRIRMHQLIIDLWRKHTPAVLLVTHDVDEAILLADRVIVLADGKIADDIRIDLPRQRDSGQAGFQLIRSRLLGLLGVKGAEPDTAPQASAPDSTFSELRRVASAR</sequence>
<protein>
    <recommendedName>
        <fullName evidence="1">Aliphatic sulfonates import ATP-binding protein SsuB 1</fullName>
        <ecNumber evidence="1">7.6.2.14</ecNumber>
    </recommendedName>
</protein>
<comment type="function">
    <text evidence="1">Part of the ABC transporter complex SsuABC involved in aliphatic sulfonates import. Responsible for energy coupling to the transport system.</text>
</comment>
<comment type="catalytic activity">
    <reaction evidence="1">
        <text>ATP + H2O + aliphatic sulfonate-[sulfonate-binding protein]Side 1 = ADP + phosphate + aliphatic sulfonateSide 2 + [sulfonate-binding protein]Side 1.</text>
        <dbReference type="EC" id="7.6.2.14"/>
    </reaction>
</comment>
<comment type="subunit">
    <text evidence="1">The complex is composed of two ATP-binding proteins (SsuB), two transmembrane proteins (SsuC) and a solute-binding protein (SsuA).</text>
</comment>
<comment type="subcellular location">
    <subcellularLocation>
        <location evidence="1">Cell inner membrane</location>
        <topology evidence="1">Peripheral membrane protein</topology>
    </subcellularLocation>
</comment>
<comment type="similarity">
    <text evidence="1">Belongs to the ABC transporter superfamily. Aliphatic sulfonates importer (TC 3.A.1.17.2) family.</text>
</comment>
<gene>
    <name evidence="1" type="primary">ssuB1</name>
    <name type="ordered locus">PSPTO_1797</name>
</gene>
<feature type="chain" id="PRO_0000279943" description="Aliphatic sulfonates import ATP-binding protein SsuB 1">
    <location>
        <begin position="1"/>
        <end position="270"/>
    </location>
</feature>
<feature type="domain" description="ABC transporter" evidence="1">
    <location>
        <begin position="18"/>
        <end position="232"/>
    </location>
</feature>
<feature type="region of interest" description="Disordered" evidence="2">
    <location>
        <begin position="247"/>
        <end position="270"/>
    </location>
</feature>
<feature type="compositionally biased region" description="Polar residues" evidence="2">
    <location>
        <begin position="251"/>
        <end position="261"/>
    </location>
</feature>
<feature type="binding site" evidence="1">
    <location>
        <begin position="50"/>
        <end position="57"/>
    </location>
    <ligand>
        <name>ATP</name>
        <dbReference type="ChEBI" id="CHEBI:30616"/>
    </ligand>
</feature>
<reference key="1">
    <citation type="journal article" date="2003" name="Proc. Natl. Acad. Sci. U.S.A.">
        <title>The complete genome sequence of the Arabidopsis and tomato pathogen Pseudomonas syringae pv. tomato DC3000.</title>
        <authorList>
            <person name="Buell C.R."/>
            <person name="Joardar V."/>
            <person name="Lindeberg M."/>
            <person name="Selengut J."/>
            <person name="Paulsen I.T."/>
            <person name="Gwinn M.L."/>
            <person name="Dodson R.J."/>
            <person name="DeBoy R.T."/>
            <person name="Durkin A.S."/>
            <person name="Kolonay J.F."/>
            <person name="Madupu R."/>
            <person name="Daugherty S.C."/>
            <person name="Brinkac L.M."/>
            <person name="Beanan M.J."/>
            <person name="Haft D.H."/>
            <person name="Nelson W.C."/>
            <person name="Davidsen T.M."/>
            <person name="Zafar N."/>
            <person name="Zhou L."/>
            <person name="Liu J."/>
            <person name="Yuan Q."/>
            <person name="Khouri H.M."/>
            <person name="Fedorova N.B."/>
            <person name="Tran B."/>
            <person name="Russell D."/>
            <person name="Berry K.J."/>
            <person name="Utterback T.R."/>
            <person name="Van Aken S.E."/>
            <person name="Feldblyum T.V."/>
            <person name="D'Ascenzo M."/>
            <person name="Deng W.-L."/>
            <person name="Ramos A.R."/>
            <person name="Alfano J.R."/>
            <person name="Cartinhour S."/>
            <person name="Chatterjee A.K."/>
            <person name="Delaney T.P."/>
            <person name="Lazarowitz S.G."/>
            <person name="Martin G.B."/>
            <person name="Schneider D.J."/>
            <person name="Tang X."/>
            <person name="Bender C.L."/>
            <person name="White O."/>
            <person name="Fraser C.M."/>
            <person name="Collmer A."/>
        </authorList>
    </citation>
    <scope>NUCLEOTIDE SEQUENCE [LARGE SCALE GENOMIC DNA]</scope>
    <source>
        <strain>ATCC BAA-871 / DC3000</strain>
    </source>
</reference>
<organism>
    <name type="scientific">Pseudomonas syringae pv. tomato (strain ATCC BAA-871 / DC3000)</name>
    <dbReference type="NCBI Taxonomy" id="223283"/>
    <lineage>
        <taxon>Bacteria</taxon>
        <taxon>Pseudomonadati</taxon>
        <taxon>Pseudomonadota</taxon>
        <taxon>Gammaproteobacteria</taxon>
        <taxon>Pseudomonadales</taxon>
        <taxon>Pseudomonadaceae</taxon>
        <taxon>Pseudomonas</taxon>
    </lineage>
</organism>
<accession>Q885N4</accession>